<protein>
    <recommendedName>
        <fullName evidence="1">Recombination protein RecR</fullName>
    </recommendedName>
</protein>
<keyword id="KW-0227">DNA damage</keyword>
<keyword id="KW-0233">DNA recombination</keyword>
<keyword id="KW-0234">DNA repair</keyword>
<keyword id="KW-0479">Metal-binding</keyword>
<keyword id="KW-0862">Zinc</keyword>
<keyword id="KW-0863">Zinc-finger</keyword>
<feature type="chain" id="PRO_0000190295" description="Recombination protein RecR">
    <location>
        <begin position="1"/>
        <end position="201"/>
    </location>
</feature>
<feature type="domain" description="Toprim" evidence="1">
    <location>
        <begin position="83"/>
        <end position="178"/>
    </location>
</feature>
<feature type="zinc finger region" description="C4-type" evidence="1">
    <location>
        <begin position="60"/>
        <end position="75"/>
    </location>
</feature>
<gene>
    <name evidence="1" type="primary">recR</name>
    <name type="ordered locus">BR0032</name>
    <name type="ordered locus">BS1330_I0032</name>
</gene>
<comment type="function">
    <text evidence="1">May play a role in DNA repair. It seems to be involved in an RecBC-independent recombinational process of DNA repair. It may act with RecF and RecO.</text>
</comment>
<comment type="similarity">
    <text evidence="1">Belongs to the RecR family.</text>
</comment>
<reference key="1">
    <citation type="journal article" date="2002" name="Proc. Natl. Acad. Sci. U.S.A.">
        <title>The Brucella suis genome reveals fundamental similarities between animal and plant pathogens and symbionts.</title>
        <authorList>
            <person name="Paulsen I.T."/>
            <person name="Seshadri R."/>
            <person name="Nelson K.E."/>
            <person name="Eisen J.A."/>
            <person name="Heidelberg J.F."/>
            <person name="Read T.D."/>
            <person name="Dodson R.J."/>
            <person name="Umayam L.A."/>
            <person name="Brinkac L.M."/>
            <person name="Beanan M.J."/>
            <person name="Daugherty S.C."/>
            <person name="DeBoy R.T."/>
            <person name="Durkin A.S."/>
            <person name="Kolonay J.F."/>
            <person name="Madupu R."/>
            <person name="Nelson W.C."/>
            <person name="Ayodeji B."/>
            <person name="Kraul M."/>
            <person name="Shetty J."/>
            <person name="Malek J.A."/>
            <person name="Van Aken S.E."/>
            <person name="Riedmuller S."/>
            <person name="Tettelin H."/>
            <person name="Gill S.R."/>
            <person name="White O."/>
            <person name="Salzberg S.L."/>
            <person name="Hoover D.L."/>
            <person name="Lindler L.E."/>
            <person name="Halling S.M."/>
            <person name="Boyle S.M."/>
            <person name="Fraser C.M."/>
        </authorList>
    </citation>
    <scope>NUCLEOTIDE SEQUENCE [LARGE SCALE GENOMIC DNA]</scope>
    <source>
        <strain>1330</strain>
    </source>
</reference>
<reference key="2">
    <citation type="journal article" date="2011" name="J. Bacteriol.">
        <title>Revised genome sequence of Brucella suis 1330.</title>
        <authorList>
            <person name="Tae H."/>
            <person name="Shallom S."/>
            <person name="Settlage R."/>
            <person name="Preston D."/>
            <person name="Adams L.G."/>
            <person name="Garner H.R."/>
        </authorList>
    </citation>
    <scope>NUCLEOTIDE SEQUENCE [LARGE SCALE GENOMIC DNA]</scope>
    <source>
        <strain>1330</strain>
    </source>
</reference>
<accession>Q8G3B7</accession>
<accession>G0KAK4</accession>
<sequence>MSKRIAGPEIERLIQLLARVPGLGPRSARRAALHLIKKKEALLVPLGGAMQEAAEKVRICSCCGNVDTSDPCTICTDERRDPATLIVVEDVSDLWALERAGTMNVRYHVLGGRLSPLDGIGPDDLNIKGLVERVASGAIKEVILAVNATVEGQTTAHYITDQLSNFDVRVTRLAHGVPVGGELDYLDEGTLAAALRARTTL</sequence>
<evidence type="ECO:0000255" key="1">
    <source>
        <dbReference type="HAMAP-Rule" id="MF_00017"/>
    </source>
</evidence>
<name>RECR_BRUSU</name>
<organism>
    <name type="scientific">Brucella suis biovar 1 (strain 1330)</name>
    <dbReference type="NCBI Taxonomy" id="204722"/>
    <lineage>
        <taxon>Bacteria</taxon>
        <taxon>Pseudomonadati</taxon>
        <taxon>Pseudomonadota</taxon>
        <taxon>Alphaproteobacteria</taxon>
        <taxon>Hyphomicrobiales</taxon>
        <taxon>Brucellaceae</taxon>
        <taxon>Brucella/Ochrobactrum group</taxon>
        <taxon>Brucella</taxon>
    </lineage>
</organism>
<proteinExistence type="inferred from homology"/>
<dbReference type="EMBL" id="AE014291">
    <property type="protein sequence ID" value="AAN28989.1"/>
    <property type="molecule type" value="Genomic_DNA"/>
</dbReference>
<dbReference type="EMBL" id="CP002997">
    <property type="protein sequence ID" value="AEM17401.1"/>
    <property type="molecule type" value="Genomic_DNA"/>
</dbReference>
<dbReference type="RefSeq" id="WP_002965279.1">
    <property type="nucleotide sequence ID" value="NZ_KN046804.1"/>
</dbReference>
<dbReference type="SMR" id="Q8G3B7"/>
<dbReference type="GeneID" id="97534533"/>
<dbReference type="KEGG" id="bms:BR0032"/>
<dbReference type="KEGG" id="bsi:BS1330_I0032"/>
<dbReference type="PATRIC" id="fig|204722.22.peg.1800"/>
<dbReference type="HOGENOM" id="CLU_060739_1_1_5"/>
<dbReference type="PhylomeDB" id="Q8G3B7"/>
<dbReference type="Proteomes" id="UP000007104">
    <property type="component" value="Chromosome I"/>
</dbReference>
<dbReference type="GO" id="GO:0003677">
    <property type="term" value="F:DNA binding"/>
    <property type="evidence" value="ECO:0007669"/>
    <property type="project" value="UniProtKB-UniRule"/>
</dbReference>
<dbReference type="GO" id="GO:0008270">
    <property type="term" value="F:zinc ion binding"/>
    <property type="evidence" value="ECO:0007669"/>
    <property type="project" value="UniProtKB-KW"/>
</dbReference>
<dbReference type="GO" id="GO:0006310">
    <property type="term" value="P:DNA recombination"/>
    <property type="evidence" value="ECO:0007669"/>
    <property type="project" value="UniProtKB-UniRule"/>
</dbReference>
<dbReference type="GO" id="GO:0006281">
    <property type="term" value="P:DNA repair"/>
    <property type="evidence" value="ECO:0007669"/>
    <property type="project" value="UniProtKB-UniRule"/>
</dbReference>
<dbReference type="CDD" id="cd01025">
    <property type="entry name" value="TOPRIM_recR"/>
    <property type="match status" value="1"/>
</dbReference>
<dbReference type="Gene3D" id="3.40.1360.10">
    <property type="match status" value="1"/>
</dbReference>
<dbReference type="Gene3D" id="6.10.250.240">
    <property type="match status" value="1"/>
</dbReference>
<dbReference type="Gene3D" id="1.10.8.420">
    <property type="entry name" value="RecR Domain 1"/>
    <property type="match status" value="1"/>
</dbReference>
<dbReference type="HAMAP" id="MF_00017">
    <property type="entry name" value="RecR"/>
    <property type="match status" value="1"/>
</dbReference>
<dbReference type="InterPro" id="IPR000093">
    <property type="entry name" value="DNA_Rcmb_RecR"/>
</dbReference>
<dbReference type="InterPro" id="IPR023627">
    <property type="entry name" value="Rcmb_RecR"/>
</dbReference>
<dbReference type="InterPro" id="IPR015967">
    <property type="entry name" value="Rcmb_RecR_Znf"/>
</dbReference>
<dbReference type="InterPro" id="IPR006171">
    <property type="entry name" value="TOPRIM_dom"/>
</dbReference>
<dbReference type="InterPro" id="IPR034137">
    <property type="entry name" value="TOPRIM_RecR"/>
</dbReference>
<dbReference type="NCBIfam" id="TIGR00615">
    <property type="entry name" value="recR"/>
    <property type="match status" value="1"/>
</dbReference>
<dbReference type="PANTHER" id="PTHR30446">
    <property type="entry name" value="RECOMBINATION PROTEIN RECR"/>
    <property type="match status" value="1"/>
</dbReference>
<dbReference type="PANTHER" id="PTHR30446:SF0">
    <property type="entry name" value="RECOMBINATION PROTEIN RECR"/>
    <property type="match status" value="1"/>
</dbReference>
<dbReference type="Pfam" id="PF21175">
    <property type="entry name" value="RecR_C"/>
    <property type="match status" value="1"/>
</dbReference>
<dbReference type="Pfam" id="PF21176">
    <property type="entry name" value="RecR_HhH"/>
    <property type="match status" value="1"/>
</dbReference>
<dbReference type="Pfam" id="PF02132">
    <property type="entry name" value="RecR_ZnF"/>
    <property type="match status" value="1"/>
</dbReference>
<dbReference type="Pfam" id="PF13662">
    <property type="entry name" value="Toprim_4"/>
    <property type="match status" value="1"/>
</dbReference>
<dbReference type="SMART" id="SM00493">
    <property type="entry name" value="TOPRIM"/>
    <property type="match status" value="1"/>
</dbReference>
<dbReference type="SUPFAM" id="SSF111304">
    <property type="entry name" value="Recombination protein RecR"/>
    <property type="match status" value="1"/>
</dbReference>
<dbReference type="PROSITE" id="PS01300">
    <property type="entry name" value="RECR"/>
    <property type="match status" value="1"/>
</dbReference>
<dbReference type="PROSITE" id="PS50880">
    <property type="entry name" value="TOPRIM"/>
    <property type="match status" value="1"/>
</dbReference>